<accession>O14173</accession>
<feature type="chain" id="PRO_0000116699" description="Uncharacterized protein C4D7.07c">
    <location>
        <begin position="1"/>
        <end position="601"/>
    </location>
</feature>
<feature type="transmembrane region" description="Helical" evidence="1">
    <location>
        <begin position="74"/>
        <end position="94"/>
    </location>
</feature>
<feature type="transmembrane region" description="Helical" evidence="1">
    <location>
        <begin position="104"/>
        <end position="124"/>
    </location>
</feature>
<feature type="transmembrane region" description="Helical" evidence="1">
    <location>
        <begin position="531"/>
        <end position="551"/>
    </location>
</feature>
<dbReference type="EMBL" id="CU329670">
    <property type="protein sequence ID" value="CAB11279.2"/>
    <property type="molecule type" value="Genomic_DNA"/>
</dbReference>
<dbReference type="PIR" id="T38798">
    <property type="entry name" value="T38798"/>
</dbReference>
<dbReference type="BioGRID" id="279942">
    <property type="interactions" value="23"/>
</dbReference>
<dbReference type="STRING" id="284812.O14173"/>
<dbReference type="iPTMnet" id="O14173"/>
<dbReference type="PaxDb" id="4896-SPAC4D7.07c.1"/>
<dbReference type="EnsemblFungi" id="SPAC4D7.07c.1">
    <property type="protein sequence ID" value="SPAC4D7.07c.1:pep"/>
    <property type="gene ID" value="SPAC4D7.07c"/>
</dbReference>
<dbReference type="KEGG" id="spo:2543524"/>
<dbReference type="PomBase" id="SPAC4D7.07c"/>
<dbReference type="VEuPathDB" id="FungiDB:SPAC4D7.07c"/>
<dbReference type="HOGENOM" id="CLU_454280_0_0_1"/>
<dbReference type="InParanoid" id="O14173"/>
<dbReference type="PRO" id="PR:O14173"/>
<dbReference type="Proteomes" id="UP000002485">
    <property type="component" value="Chromosome I"/>
</dbReference>
<dbReference type="GO" id="GO:0044732">
    <property type="term" value="C:mitotic spindle pole body"/>
    <property type="evidence" value="ECO:0000314"/>
    <property type="project" value="PomBase"/>
</dbReference>
<dbReference type="GO" id="GO:1990578">
    <property type="term" value="C:perinuclear endoplasmic reticulum membrane"/>
    <property type="evidence" value="ECO:0007005"/>
    <property type="project" value="PomBase"/>
</dbReference>
<dbReference type="GO" id="GO:0007052">
    <property type="term" value="P:mitotic spindle organization"/>
    <property type="evidence" value="ECO:0000315"/>
    <property type="project" value="PomBase"/>
</dbReference>
<dbReference type="Gene3D" id="2.60.120.260">
    <property type="entry name" value="Galactose-binding domain-like"/>
    <property type="match status" value="1"/>
</dbReference>
<protein>
    <recommendedName>
        <fullName>Uncharacterized protein C4D7.07c</fullName>
    </recommendedName>
</protein>
<reference key="1">
    <citation type="journal article" date="2002" name="Nature">
        <title>The genome sequence of Schizosaccharomyces pombe.</title>
        <authorList>
            <person name="Wood V."/>
            <person name="Gwilliam R."/>
            <person name="Rajandream M.A."/>
            <person name="Lyne M.H."/>
            <person name="Lyne R."/>
            <person name="Stewart A."/>
            <person name="Sgouros J.G."/>
            <person name="Peat N."/>
            <person name="Hayles J."/>
            <person name="Baker S.G."/>
            <person name="Basham D."/>
            <person name="Bowman S."/>
            <person name="Brooks K."/>
            <person name="Brown D."/>
            <person name="Brown S."/>
            <person name="Chillingworth T."/>
            <person name="Churcher C.M."/>
            <person name="Collins M."/>
            <person name="Connor R."/>
            <person name="Cronin A."/>
            <person name="Davis P."/>
            <person name="Feltwell T."/>
            <person name="Fraser A."/>
            <person name="Gentles S."/>
            <person name="Goble A."/>
            <person name="Hamlin N."/>
            <person name="Harris D.E."/>
            <person name="Hidalgo J."/>
            <person name="Hodgson G."/>
            <person name="Holroyd S."/>
            <person name="Hornsby T."/>
            <person name="Howarth S."/>
            <person name="Huckle E.J."/>
            <person name="Hunt S."/>
            <person name="Jagels K."/>
            <person name="James K.D."/>
            <person name="Jones L."/>
            <person name="Jones M."/>
            <person name="Leather S."/>
            <person name="McDonald S."/>
            <person name="McLean J."/>
            <person name="Mooney P."/>
            <person name="Moule S."/>
            <person name="Mungall K.L."/>
            <person name="Murphy L.D."/>
            <person name="Niblett D."/>
            <person name="Odell C."/>
            <person name="Oliver K."/>
            <person name="O'Neil S."/>
            <person name="Pearson D."/>
            <person name="Quail M.A."/>
            <person name="Rabbinowitsch E."/>
            <person name="Rutherford K.M."/>
            <person name="Rutter S."/>
            <person name="Saunders D."/>
            <person name="Seeger K."/>
            <person name="Sharp S."/>
            <person name="Skelton J."/>
            <person name="Simmonds M.N."/>
            <person name="Squares R."/>
            <person name="Squares S."/>
            <person name="Stevens K."/>
            <person name="Taylor K."/>
            <person name="Taylor R.G."/>
            <person name="Tivey A."/>
            <person name="Walsh S.V."/>
            <person name="Warren T."/>
            <person name="Whitehead S."/>
            <person name="Woodward J.R."/>
            <person name="Volckaert G."/>
            <person name="Aert R."/>
            <person name="Robben J."/>
            <person name="Grymonprez B."/>
            <person name="Weltjens I."/>
            <person name="Vanstreels E."/>
            <person name="Rieger M."/>
            <person name="Schaefer M."/>
            <person name="Mueller-Auer S."/>
            <person name="Gabel C."/>
            <person name="Fuchs M."/>
            <person name="Duesterhoeft A."/>
            <person name="Fritzc C."/>
            <person name="Holzer E."/>
            <person name="Moestl D."/>
            <person name="Hilbert H."/>
            <person name="Borzym K."/>
            <person name="Langer I."/>
            <person name="Beck A."/>
            <person name="Lehrach H."/>
            <person name="Reinhardt R."/>
            <person name="Pohl T.M."/>
            <person name="Eger P."/>
            <person name="Zimmermann W."/>
            <person name="Wedler H."/>
            <person name="Wambutt R."/>
            <person name="Purnelle B."/>
            <person name="Goffeau A."/>
            <person name="Cadieu E."/>
            <person name="Dreano S."/>
            <person name="Gloux S."/>
            <person name="Lelaure V."/>
            <person name="Mottier S."/>
            <person name="Galibert F."/>
            <person name="Aves S.J."/>
            <person name="Xiang Z."/>
            <person name="Hunt C."/>
            <person name="Moore K."/>
            <person name="Hurst S.M."/>
            <person name="Lucas M."/>
            <person name="Rochet M."/>
            <person name="Gaillardin C."/>
            <person name="Tallada V.A."/>
            <person name="Garzon A."/>
            <person name="Thode G."/>
            <person name="Daga R.R."/>
            <person name="Cruzado L."/>
            <person name="Jimenez J."/>
            <person name="Sanchez M."/>
            <person name="del Rey F."/>
            <person name="Benito J."/>
            <person name="Dominguez A."/>
            <person name="Revuelta J.L."/>
            <person name="Moreno S."/>
            <person name="Armstrong J."/>
            <person name="Forsburg S.L."/>
            <person name="Cerutti L."/>
            <person name="Lowe T."/>
            <person name="McCombie W.R."/>
            <person name="Paulsen I."/>
            <person name="Potashkin J."/>
            <person name="Shpakovski G.V."/>
            <person name="Ussery D."/>
            <person name="Barrell B.G."/>
            <person name="Nurse P."/>
        </authorList>
    </citation>
    <scope>NUCLEOTIDE SEQUENCE [LARGE SCALE GENOMIC DNA]</scope>
    <source>
        <strain>972 / ATCC 24843</strain>
    </source>
</reference>
<reference key="2">
    <citation type="journal article" date="2011" name="Science">
        <title>Comparative functional genomics of the fission yeasts.</title>
        <authorList>
            <person name="Rhind N."/>
            <person name="Chen Z."/>
            <person name="Yassour M."/>
            <person name="Thompson D.A."/>
            <person name="Haas B.J."/>
            <person name="Habib N."/>
            <person name="Wapinski I."/>
            <person name="Roy S."/>
            <person name="Lin M.F."/>
            <person name="Heiman D.I."/>
            <person name="Young S.K."/>
            <person name="Furuya K."/>
            <person name="Guo Y."/>
            <person name="Pidoux A."/>
            <person name="Chen H.M."/>
            <person name="Robbertse B."/>
            <person name="Goldberg J.M."/>
            <person name="Aoki K."/>
            <person name="Bayne E.H."/>
            <person name="Berlin A.M."/>
            <person name="Desjardins C.A."/>
            <person name="Dobbs E."/>
            <person name="Dukaj L."/>
            <person name="Fan L."/>
            <person name="FitzGerald M.G."/>
            <person name="French C."/>
            <person name="Gujja S."/>
            <person name="Hansen K."/>
            <person name="Keifenheim D."/>
            <person name="Levin J.Z."/>
            <person name="Mosher R.A."/>
            <person name="Mueller C.A."/>
            <person name="Pfiffner J."/>
            <person name="Priest M."/>
            <person name="Russ C."/>
            <person name="Smialowska A."/>
            <person name="Swoboda P."/>
            <person name="Sykes S.M."/>
            <person name="Vaughn M."/>
            <person name="Vengrova S."/>
            <person name="Yoder R."/>
            <person name="Zeng Q."/>
            <person name="Allshire R."/>
            <person name="Baulcombe D."/>
            <person name="Birren B.W."/>
            <person name="Brown W."/>
            <person name="Ekwall K."/>
            <person name="Kellis M."/>
            <person name="Leatherwood J."/>
            <person name="Levin H."/>
            <person name="Margalit H."/>
            <person name="Martienssen R."/>
            <person name="Nieduszynski C.A."/>
            <person name="Spatafora J.W."/>
            <person name="Friedman N."/>
            <person name="Dalgaard J.Z."/>
            <person name="Baumann P."/>
            <person name="Niki H."/>
            <person name="Regev A."/>
            <person name="Nusbaum C."/>
        </authorList>
    </citation>
    <scope>REVISION OF GENE MODEL</scope>
</reference>
<reference key="3">
    <citation type="journal article" date="2006" name="Nat. Biotechnol.">
        <title>ORFeome cloning and global analysis of protein localization in the fission yeast Schizosaccharomyces pombe.</title>
        <authorList>
            <person name="Matsuyama A."/>
            <person name="Arai R."/>
            <person name="Yashiroda Y."/>
            <person name="Shirai A."/>
            <person name="Kamata A."/>
            <person name="Sekido S."/>
            <person name="Kobayashi Y."/>
            <person name="Hashimoto A."/>
            <person name="Hamamoto M."/>
            <person name="Hiraoka Y."/>
            <person name="Horinouchi S."/>
            <person name="Yoshida M."/>
        </authorList>
    </citation>
    <scope>SUBCELLULAR LOCATION [LARGE SCALE ANALYSIS]</scope>
</reference>
<name>YE57_SCHPO</name>
<gene>
    <name type="ORF">SPAC4D7.07c</name>
</gene>
<organism>
    <name type="scientific">Schizosaccharomyces pombe (strain 972 / ATCC 24843)</name>
    <name type="common">Fission yeast</name>
    <dbReference type="NCBI Taxonomy" id="284812"/>
    <lineage>
        <taxon>Eukaryota</taxon>
        <taxon>Fungi</taxon>
        <taxon>Dikarya</taxon>
        <taxon>Ascomycota</taxon>
        <taxon>Taphrinomycotina</taxon>
        <taxon>Schizosaccharomycetes</taxon>
        <taxon>Schizosaccharomycetales</taxon>
        <taxon>Schizosaccharomycetaceae</taxon>
        <taxon>Schizosaccharomyces</taxon>
    </lineage>
</organism>
<keyword id="KW-0256">Endoplasmic reticulum</keyword>
<keyword id="KW-0472">Membrane</keyword>
<keyword id="KW-1185">Reference proteome</keyword>
<keyword id="KW-0812">Transmembrane</keyword>
<keyword id="KW-1133">Transmembrane helix</keyword>
<comment type="subcellular location">
    <subcellularLocation>
        <location evidence="2">Endoplasmic reticulum membrane</location>
        <topology evidence="2">Multi-pass membrane protein</topology>
    </subcellularLocation>
</comment>
<proteinExistence type="predicted"/>
<evidence type="ECO:0000255" key="1"/>
<evidence type="ECO:0000305" key="2"/>
<sequence>MMSRKRQASSNDFFDMEQLLIANDALVHQNHSTPNHASDELSVNDPSPLSRGLQSDVNSNISRNISNTFFKKSIFFFVYYCKQALEFISTVFSIIKFLLNRRKVSFLLSFLLLFSLFLLIPNDGRVNIKFFYKDFVDRIPFRFIPSNFNISFGKHLEQAKSLFKSKFGNSSSTYNERDSIMPLLKLQSNLTEAKTLLYQNPISPEDVLLHFWDRNLMSTYDLKIQDINDSVNPLLNTYLDFIEKDIYLVSHLPVSEKHPGNIPISLVNKSVQAICSFAEHYNLLRNPSYRGFLRINNGESIFNLLCIEDLHESVNLDILCLKDILRNIAQSSKEAMYIVKRHNSSQSFYGNRSTTNFSIINSGLYLKKDAAKNLLAKQFDATYSYYHKDLEESVHQKLNSNLEKRVEKYIKHSCSQRNVADHPDFALKVVGAVVDYGWTFPKPKFSDILRDYWGKKANLPTALLDTSINSNWCNYEDTVQVSVRLNRPMYVRHISLIFPIHGDDSYFPREIQMFGLINDINYQILSNMNNLVLLATIPVSLSSVFEVNYYYLPKFSDTPGLLEEAYFNTFVFRAFSKNESLTSQICLYHIGIHGKEINEEF</sequence>